<feature type="chain" id="PRO_0000288039" description="NBPF family member NBPF4">
    <location>
        <begin position="1"/>
        <end position="638"/>
    </location>
</feature>
<feature type="domain" description="Olduvai 1" evidence="2">
    <location>
        <begin position="174"/>
        <end position="261"/>
    </location>
</feature>
<feature type="domain" description="Olduvai 2" evidence="2">
    <location>
        <begin position="326"/>
        <end position="399"/>
    </location>
</feature>
<feature type="domain" description="Olduvai 3" evidence="2">
    <location>
        <begin position="400"/>
        <end position="503"/>
    </location>
</feature>
<feature type="region of interest" description="Disordered" evidence="3">
    <location>
        <begin position="157"/>
        <end position="285"/>
    </location>
</feature>
<feature type="region of interest" description="Disordered" evidence="3">
    <location>
        <begin position="562"/>
        <end position="584"/>
    </location>
</feature>
<feature type="coiled-coil region" evidence="1">
    <location>
        <begin position="10"/>
        <end position="43"/>
    </location>
</feature>
<feature type="coiled-coil region" evidence="1">
    <location>
        <begin position="69"/>
        <end position="115"/>
    </location>
</feature>
<feature type="compositionally biased region" description="Acidic residues" evidence="3">
    <location>
        <begin position="165"/>
        <end position="179"/>
    </location>
</feature>
<feature type="compositionally biased region" description="Basic and acidic residues" evidence="3">
    <location>
        <begin position="192"/>
        <end position="202"/>
    </location>
</feature>
<feature type="compositionally biased region" description="Low complexity" evidence="3">
    <location>
        <begin position="214"/>
        <end position="226"/>
    </location>
</feature>
<feature type="compositionally biased region" description="Basic and acidic residues" evidence="3">
    <location>
        <begin position="232"/>
        <end position="251"/>
    </location>
</feature>
<feature type="compositionally biased region" description="Basic and acidic residues" evidence="3">
    <location>
        <begin position="264"/>
        <end position="273"/>
    </location>
</feature>
<name>NBPF4_HUMAN</name>
<evidence type="ECO:0000255" key="1"/>
<evidence type="ECO:0000255" key="2">
    <source>
        <dbReference type="PROSITE-ProRule" id="PRU00647"/>
    </source>
</evidence>
<evidence type="ECO:0000256" key="3">
    <source>
        <dbReference type="SAM" id="MobiDB-lite"/>
    </source>
</evidence>
<evidence type="ECO:0000269" key="4">
    <source>
    </source>
</evidence>
<evidence type="ECO:0000305" key="5"/>
<evidence type="ECO:0000312" key="6">
    <source>
        <dbReference type="HGNC" id="HGNC:26550"/>
    </source>
</evidence>
<comment type="subcellular location">
    <subcellularLocation>
        <location evidence="5">Cytoplasm</location>
    </subcellularLocation>
</comment>
<comment type="tissue specificity">
    <text evidence="4">Expressed in testis.</text>
</comment>
<comment type="miscellaneous">
    <text>Encoded by one of the numerous copies of NBPF genes clustered in the p36, p12 and q21 region of the chromosome 1.</text>
</comment>
<comment type="similarity">
    <text evidence="5">Belongs to the NBPF family.</text>
</comment>
<comment type="sequence caution" evidence="5">
    <conflict type="miscellaneous discrepancy">
        <sequence resource="EMBL-CDS" id="BAB71469"/>
    </conflict>
    <text>Aberrant splicing.</text>
</comment>
<accession>Q96M43</accession>
<accession>Q5T483</accession>
<organism>
    <name type="scientific">Homo sapiens</name>
    <name type="common">Human</name>
    <dbReference type="NCBI Taxonomy" id="9606"/>
    <lineage>
        <taxon>Eukaryota</taxon>
        <taxon>Metazoa</taxon>
        <taxon>Chordata</taxon>
        <taxon>Craniata</taxon>
        <taxon>Vertebrata</taxon>
        <taxon>Euteleostomi</taxon>
        <taxon>Mammalia</taxon>
        <taxon>Eutheria</taxon>
        <taxon>Euarchontoglires</taxon>
        <taxon>Primates</taxon>
        <taxon>Haplorrhini</taxon>
        <taxon>Catarrhini</taxon>
        <taxon>Hominidae</taxon>
        <taxon>Homo</taxon>
    </lineage>
</organism>
<dbReference type="EMBL" id="AK057395">
    <property type="protein sequence ID" value="BAB71469.1"/>
    <property type="status" value="ALT_SEQ"/>
    <property type="molecule type" value="mRNA"/>
</dbReference>
<dbReference type="EMBL" id="AK302318">
    <property type="protein sequence ID" value="BAG63656.1"/>
    <property type="molecule type" value="mRNA"/>
</dbReference>
<dbReference type="EMBL" id="AL359258">
    <property type="status" value="NOT_ANNOTATED_CDS"/>
    <property type="molecule type" value="Genomic_DNA"/>
</dbReference>
<dbReference type="CCDS" id="CCDS44182.1"/>
<dbReference type="RefSeq" id="NP_001137461.1">
    <property type="nucleotide sequence ID" value="NM_001143989.3"/>
</dbReference>
<dbReference type="SMR" id="Q96M43"/>
<dbReference type="BioGRID" id="127155">
    <property type="interactions" value="1"/>
</dbReference>
<dbReference type="STRING" id="9606.ENSP00000389237"/>
<dbReference type="iPTMnet" id="Q96M43"/>
<dbReference type="PhosphoSitePlus" id="Q96M43"/>
<dbReference type="BioMuta" id="NBPF4"/>
<dbReference type="DMDM" id="374095427"/>
<dbReference type="MassIVE" id="Q96M43"/>
<dbReference type="PaxDb" id="9606-ENSP00000389237"/>
<dbReference type="Antibodypedia" id="67464">
    <property type="antibodies" value="37 antibodies from 15 providers"/>
</dbReference>
<dbReference type="DNASU" id="148545"/>
<dbReference type="Ensembl" id="ENST00000415641.8">
    <property type="protein sequence ID" value="ENSP00000389237.2"/>
    <property type="gene ID" value="ENSG00000196427.14"/>
</dbReference>
<dbReference type="GeneID" id="148545"/>
<dbReference type="KEGG" id="hsa:148545"/>
<dbReference type="MANE-Select" id="ENST00000415641.8">
    <property type="protein sequence ID" value="ENSP00000389237.2"/>
    <property type="RefSeq nucleotide sequence ID" value="NM_001143989.3"/>
    <property type="RefSeq protein sequence ID" value="NP_001137461.1"/>
</dbReference>
<dbReference type="UCSC" id="uc009weo.3">
    <property type="organism name" value="human"/>
</dbReference>
<dbReference type="AGR" id="HGNC:26550"/>
<dbReference type="CTD" id="148545"/>
<dbReference type="DisGeNET" id="148545"/>
<dbReference type="GeneCards" id="NBPF4"/>
<dbReference type="HGNC" id="HGNC:26550">
    <property type="gene designation" value="NBPF4"/>
</dbReference>
<dbReference type="HPA" id="ENSG00000196427">
    <property type="expression patterns" value="Group enriched (intestine, testis)"/>
</dbReference>
<dbReference type="MIM" id="613994">
    <property type="type" value="gene"/>
</dbReference>
<dbReference type="neXtProt" id="NX_Q96M43"/>
<dbReference type="PharmGKB" id="PA142671284"/>
<dbReference type="VEuPathDB" id="HostDB:ENSG00000196427"/>
<dbReference type="eggNOG" id="ENOG502RU1I">
    <property type="taxonomic scope" value="Eukaryota"/>
</dbReference>
<dbReference type="GeneTree" id="ENSGT00420000029746"/>
<dbReference type="HOGENOM" id="CLU_030855_0_0_1"/>
<dbReference type="InParanoid" id="Q96M43"/>
<dbReference type="OrthoDB" id="9535081at2759"/>
<dbReference type="PAN-GO" id="Q96M43">
    <property type="GO annotations" value="0 GO annotations based on evolutionary models"/>
</dbReference>
<dbReference type="PhylomeDB" id="Q96M43"/>
<dbReference type="TreeFam" id="TF341151"/>
<dbReference type="PathwayCommons" id="Q96M43"/>
<dbReference type="BioGRID-ORCS" id="148545">
    <property type="hits" value="42 hits in 709 CRISPR screens"/>
</dbReference>
<dbReference type="GenomeRNAi" id="148545"/>
<dbReference type="Pharos" id="Q96M43">
    <property type="development level" value="Tdark"/>
</dbReference>
<dbReference type="PRO" id="PR:Q96M43"/>
<dbReference type="Proteomes" id="UP000005640">
    <property type="component" value="Chromosome 1"/>
</dbReference>
<dbReference type="RNAct" id="Q96M43">
    <property type="molecule type" value="protein"/>
</dbReference>
<dbReference type="Bgee" id="ENSG00000196427">
    <property type="expression patterns" value="Expressed in sperm and 50 other cell types or tissues"/>
</dbReference>
<dbReference type="ExpressionAtlas" id="Q96M43">
    <property type="expression patterns" value="baseline and differential"/>
</dbReference>
<dbReference type="GO" id="GO:0005737">
    <property type="term" value="C:cytoplasm"/>
    <property type="evidence" value="ECO:0007669"/>
    <property type="project" value="UniProtKB-SubCell"/>
</dbReference>
<dbReference type="Gene3D" id="1.20.5.1700">
    <property type="match status" value="1"/>
</dbReference>
<dbReference type="InterPro" id="IPR055306">
    <property type="entry name" value="NBPF"/>
</dbReference>
<dbReference type="InterPro" id="IPR010630">
    <property type="entry name" value="Olduvai_dom"/>
</dbReference>
<dbReference type="PANTHER" id="PTHR14199:SF29">
    <property type="entry name" value="NEUROBLASTOMA BREAKPOINT FAMILY MEMBER 4-RELATED"/>
    <property type="match status" value="1"/>
</dbReference>
<dbReference type="PANTHER" id="PTHR14199">
    <property type="entry name" value="NEUROBLASTOMA BREAKPOINT FAMILY MEMBER 6-LIKE PROTEIN"/>
    <property type="match status" value="1"/>
</dbReference>
<dbReference type="Pfam" id="PF06758">
    <property type="entry name" value="Olduvai"/>
    <property type="match status" value="3"/>
</dbReference>
<dbReference type="SMART" id="SM01148">
    <property type="entry name" value="DUF1220"/>
    <property type="match status" value="4"/>
</dbReference>
<dbReference type="PROSITE" id="PS51316">
    <property type="entry name" value="ODV"/>
    <property type="match status" value="3"/>
</dbReference>
<keyword id="KW-0175">Coiled coil</keyword>
<keyword id="KW-0963">Cytoplasm</keyword>
<keyword id="KW-1185">Reference proteome</keyword>
<keyword id="KW-0677">Repeat</keyword>
<reference key="1">
    <citation type="journal article" date="2004" name="Nat. Genet.">
        <title>Complete sequencing and characterization of 21,243 full-length human cDNAs.</title>
        <authorList>
            <person name="Ota T."/>
            <person name="Suzuki Y."/>
            <person name="Nishikawa T."/>
            <person name="Otsuki T."/>
            <person name="Sugiyama T."/>
            <person name="Irie R."/>
            <person name="Wakamatsu A."/>
            <person name="Hayashi K."/>
            <person name="Sato H."/>
            <person name="Nagai K."/>
            <person name="Kimura K."/>
            <person name="Makita H."/>
            <person name="Sekine M."/>
            <person name="Obayashi M."/>
            <person name="Nishi T."/>
            <person name="Shibahara T."/>
            <person name="Tanaka T."/>
            <person name="Ishii S."/>
            <person name="Yamamoto J."/>
            <person name="Saito K."/>
            <person name="Kawai Y."/>
            <person name="Isono Y."/>
            <person name="Nakamura Y."/>
            <person name="Nagahari K."/>
            <person name="Murakami K."/>
            <person name="Yasuda T."/>
            <person name="Iwayanagi T."/>
            <person name="Wagatsuma M."/>
            <person name="Shiratori A."/>
            <person name="Sudo H."/>
            <person name="Hosoiri T."/>
            <person name="Kaku Y."/>
            <person name="Kodaira H."/>
            <person name="Kondo H."/>
            <person name="Sugawara M."/>
            <person name="Takahashi M."/>
            <person name="Kanda K."/>
            <person name="Yokoi T."/>
            <person name="Furuya T."/>
            <person name="Kikkawa E."/>
            <person name="Omura Y."/>
            <person name="Abe K."/>
            <person name="Kamihara K."/>
            <person name="Katsuta N."/>
            <person name="Sato K."/>
            <person name="Tanikawa M."/>
            <person name="Yamazaki M."/>
            <person name="Ninomiya K."/>
            <person name="Ishibashi T."/>
            <person name="Yamashita H."/>
            <person name="Murakawa K."/>
            <person name="Fujimori K."/>
            <person name="Tanai H."/>
            <person name="Kimata M."/>
            <person name="Watanabe M."/>
            <person name="Hiraoka S."/>
            <person name="Chiba Y."/>
            <person name="Ishida S."/>
            <person name="Ono Y."/>
            <person name="Takiguchi S."/>
            <person name="Watanabe S."/>
            <person name="Yosida M."/>
            <person name="Hotuta T."/>
            <person name="Kusano J."/>
            <person name="Kanehori K."/>
            <person name="Takahashi-Fujii A."/>
            <person name="Hara H."/>
            <person name="Tanase T.-O."/>
            <person name="Nomura Y."/>
            <person name="Togiya S."/>
            <person name="Komai F."/>
            <person name="Hara R."/>
            <person name="Takeuchi K."/>
            <person name="Arita M."/>
            <person name="Imose N."/>
            <person name="Musashino K."/>
            <person name="Yuuki H."/>
            <person name="Oshima A."/>
            <person name="Sasaki N."/>
            <person name="Aotsuka S."/>
            <person name="Yoshikawa Y."/>
            <person name="Matsunawa H."/>
            <person name="Ichihara T."/>
            <person name="Shiohata N."/>
            <person name="Sano S."/>
            <person name="Moriya S."/>
            <person name="Momiyama H."/>
            <person name="Satoh N."/>
            <person name="Takami S."/>
            <person name="Terashima Y."/>
            <person name="Suzuki O."/>
            <person name="Nakagawa S."/>
            <person name="Senoh A."/>
            <person name="Mizoguchi H."/>
            <person name="Goto Y."/>
            <person name="Shimizu F."/>
            <person name="Wakebe H."/>
            <person name="Hishigaki H."/>
            <person name="Watanabe T."/>
            <person name="Sugiyama A."/>
            <person name="Takemoto M."/>
            <person name="Kawakami B."/>
            <person name="Yamazaki M."/>
            <person name="Watanabe K."/>
            <person name="Kumagai A."/>
            <person name="Itakura S."/>
            <person name="Fukuzumi Y."/>
            <person name="Fujimori Y."/>
            <person name="Komiyama M."/>
            <person name="Tashiro H."/>
            <person name="Tanigami A."/>
            <person name="Fujiwara T."/>
            <person name="Ono T."/>
            <person name="Yamada K."/>
            <person name="Fujii Y."/>
            <person name="Ozaki K."/>
            <person name="Hirao M."/>
            <person name="Ohmori Y."/>
            <person name="Kawabata A."/>
            <person name="Hikiji T."/>
            <person name="Kobatake N."/>
            <person name="Inagaki H."/>
            <person name="Ikema Y."/>
            <person name="Okamoto S."/>
            <person name="Okitani R."/>
            <person name="Kawakami T."/>
            <person name="Noguchi S."/>
            <person name="Itoh T."/>
            <person name="Shigeta K."/>
            <person name="Senba T."/>
            <person name="Matsumura K."/>
            <person name="Nakajima Y."/>
            <person name="Mizuno T."/>
            <person name="Morinaga M."/>
            <person name="Sasaki M."/>
            <person name="Togashi T."/>
            <person name="Oyama M."/>
            <person name="Hata H."/>
            <person name="Watanabe M."/>
            <person name="Komatsu T."/>
            <person name="Mizushima-Sugano J."/>
            <person name="Satoh T."/>
            <person name="Shirai Y."/>
            <person name="Takahashi Y."/>
            <person name="Nakagawa K."/>
            <person name="Okumura K."/>
            <person name="Nagase T."/>
            <person name="Nomura N."/>
            <person name="Kikuchi H."/>
            <person name="Masuho Y."/>
            <person name="Yamashita R."/>
            <person name="Nakai K."/>
            <person name="Yada T."/>
            <person name="Nakamura Y."/>
            <person name="Ohara O."/>
            <person name="Isogai T."/>
            <person name="Sugano S."/>
        </authorList>
    </citation>
    <scope>NUCLEOTIDE SEQUENCE [LARGE SCALE MRNA]</scope>
    <source>
        <tissue>Testis</tissue>
    </source>
</reference>
<reference key="2">
    <citation type="journal article" date="2006" name="Nature">
        <title>The DNA sequence and biological annotation of human chromosome 1.</title>
        <authorList>
            <person name="Gregory S.G."/>
            <person name="Barlow K.F."/>
            <person name="McLay K.E."/>
            <person name="Kaul R."/>
            <person name="Swarbreck D."/>
            <person name="Dunham A."/>
            <person name="Scott C.E."/>
            <person name="Howe K.L."/>
            <person name="Woodfine K."/>
            <person name="Spencer C.C.A."/>
            <person name="Jones M.C."/>
            <person name="Gillson C."/>
            <person name="Searle S."/>
            <person name="Zhou Y."/>
            <person name="Kokocinski F."/>
            <person name="McDonald L."/>
            <person name="Evans R."/>
            <person name="Phillips K."/>
            <person name="Atkinson A."/>
            <person name="Cooper R."/>
            <person name="Jones C."/>
            <person name="Hall R.E."/>
            <person name="Andrews T.D."/>
            <person name="Lloyd C."/>
            <person name="Ainscough R."/>
            <person name="Almeida J.P."/>
            <person name="Ambrose K.D."/>
            <person name="Anderson F."/>
            <person name="Andrew R.W."/>
            <person name="Ashwell R.I.S."/>
            <person name="Aubin K."/>
            <person name="Babbage A.K."/>
            <person name="Bagguley C.L."/>
            <person name="Bailey J."/>
            <person name="Beasley H."/>
            <person name="Bethel G."/>
            <person name="Bird C.P."/>
            <person name="Bray-Allen S."/>
            <person name="Brown J.Y."/>
            <person name="Brown A.J."/>
            <person name="Buckley D."/>
            <person name="Burton J."/>
            <person name="Bye J."/>
            <person name="Carder C."/>
            <person name="Chapman J.C."/>
            <person name="Clark S.Y."/>
            <person name="Clarke G."/>
            <person name="Clee C."/>
            <person name="Cobley V."/>
            <person name="Collier R.E."/>
            <person name="Corby N."/>
            <person name="Coville G.J."/>
            <person name="Davies J."/>
            <person name="Deadman R."/>
            <person name="Dunn M."/>
            <person name="Earthrowl M."/>
            <person name="Ellington A.G."/>
            <person name="Errington H."/>
            <person name="Frankish A."/>
            <person name="Frankland J."/>
            <person name="French L."/>
            <person name="Garner P."/>
            <person name="Garnett J."/>
            <person name="Gay L."/>
            <person name="Ghori M.R.J."/>
            <person name="Gibson R."/>
            <person name="Gilby L.M."/>
            <person name="Gillett W."/>
            <person name="Glithero R.J."/>
            <person name="Grafham D.V."/>
            <person name="Griffiths C."/>
            <person name="Griffiths-Jones S."/>
            <person name="Grocock R."/>
            <person name="Hammond S."/>
            <person name="Harrison E.S.I."/>
            <person name="Hart E."/>
            <person name="Haugen E."/>
            <person name="Heath P.D."/>
            <person name="Holmes S."/>
            <person name="Holt K."/>
            <person name="Howden P.J."/>
            <person name="Hunt A.R."/>
            <person name="Hunt S.E."/>
            <person name="Hunter G."/>
            <person name="Isherwood J."/>
            <person name="James R."/>
            <person name="Johnson C."/>
            <person name="Johnson D."/>
            <person name="Joy A."/>
            <person name="Kay M."/>
            <person name="Kershaw J.K."/>
            <person name="Kibukawa M."/>
            <person name="Kimberley A.M."/>
            <person name="King A."/>
            <person name="Knights A.J."/>
            <person name="Lad H."/>
            <person name="Laird G."/>
            <person name="Lawlor S."/>
            <person name="Leongamornlert D.A."/>
            <person name="Lloyd D.M."/>
            <person name="Loveland J."/>
            <person name="Lovell J."/>
            <person name="Lush M.J."/>
            <person name="Lyne R."/>
            <person name="Martin S."/>
            <person name="Mashreghi-Mohammadi M."/>
            <person name="Matthews L."/>
            <person name="Matthews N.S.W."/>
            <person name="McLaren S."/>
            <person name="Milne S."/>
            <person name="Mistry S."/>
            <person name="Moore M.J.F."/>
            <person name="Nickerson T."/>
            <person name="O'Dell C.N."/>
            <person name="Oliver K."/>
            <person name="Palmeiri A."/>
            <person name="Palmer S.A."/>
            <person name="Parker A."/>
            <person name="Patel D."/>
            <person name="Pearce A.V."/>
            <person name="Peck A.I."/>
            <person name="Pelan S."/>
            <person name="Phelps K."/>
            <person name="Phillimore B.J."/>
            <person name="Plumb R."/>
            <person name="Rajan J."/>
            <person name="Raymond C."/>
            <person name="Rouse G."/>
            <person name="Saenphimmachak C."/>
            <person name="Sehra H.K."/>
            <person name="Sheridan E."/>
            <person name="Shownkeen R."/>
            <person name="Sims S."/>
            <person name="Skuce C.D."/>
            <person name="Smith M."/>
            <person name="Steward C."/>
            <person name="Subramanian S."/>
            <person name="Sycamore N."/>
            <person name="Tracey A."/>
            <person name="Tromans A."/>
            <person name="Van Helmond Z."/>
            <person name="Wall M."/>
            <person name="Wallis J.M."/>
            <person name="White S."/>
            <person name="Whitehead S.L."/>
            <person name="Wilkinson J.E."/>
            <person name="Willey D.L."/>
            <person name="Williams H."/>
            <person name="Wilming L."/>
            <person name="Wray P.W."/>
            <person name="Wu Z."/>
            <person name="Coulson A."/>
            <person name="Vaudin M."/>
            <person name="Sulston J.E."/>
            <person name="Durbin R.M."/>
            <person name="Hubbard T."/>
            <person name="Wooster R."/>
            <person name="Dunham I."/>
            <person name="Carter N.P."/>
            <person name="McVean G."/>
            <person name="Ross M.T."/>
            <person name="Harrow J."/>
            <person name="Olson M.V."/>
            <person name="Beck S."/>
            <person name="Rogers J."/>
            <person name="Bentley D.R."/>
        </authorList>
    </citation>
    <scope>NUCLEOTIDE SEQUENCE [LARGE SCALE GENOMIC DNA]</scope>
    <source>
        <tissue>Testis</tissue>
    </source>
</reference>
<reference key="3">
    <citation type="journal article" date="2005" name="Mol. Biol. Evol.">
        <title>A novel gene family NBPF: intricate structure generated by gene duplications during primate evolution.</title>
        <authorList>
            <person name="Vandepoele K."/>
            <person name="Van Roy N."/>
            <person name="Staes K."/>
            <person name="Speleman F."/>
            <person name="van Roy F."/>
        </authorList>
    </citation>
    <scope>TISSUE SPECIFICITY</scope>
</reference>
<sequence length="638" mass="72053">MVVSADPLSSERAEMNILEINQELRSQLAESNQQFRDLKEKFLITQATAYSLANQLKKYKCEEYKDIIDSVLRDELQSMEKLAEKLRQAEELRQYKALVHSQAKELTQLREKLREGRDASRWLNKHLKTLLTPDDPDKSQGQDLREQLAEGHRLAEHLVHKLSPENDEDEDEDEDDKDEEVEKVQESPAPREVQKTEEKEVPQDSLEECAVTCSNSHNPSNSNQPHRSTKITFKEHEVDSALVVESEHPHDEEEEALNIPPENQNDHEEEEGKAPVPPRHHDKSNSYRHREVSFLALDEQKVCSAQDVARDYSNPKWDETSLGFLEKQSDLEEVKGQETVAPRLSRGPLRVDKHEIPQESLDGCCLTPSILPDLTPSYHPYWSTLYSFEDKQVSLALVDKIKKDQEEIEDQSPPCPRLSQELPEVKEQEVPEDSVNEVYLTPSVHHDVSDCHQPYSSTLSSLEDQLACSALDVASPTEAACPQGTWSGDLSHHQSEVQVSQAQLEPSTLVPSCLRLQLDQGFHCGNGLAQRGLSSTTCSFSANADSGNQWPFQELVLEPSLGMKNPPQLEDDALEGSASNTQGRQVTGRIRASLVLILKTIRRRLPFSKWRLAFRFAGPHAESAEIPNTAGRTQRMAG</sequence>
<protein>
    <recommendedName>
        <fullName evidence="5">NBPF family member NBPF4</fullName>
    </recommendedName>
    <alternativeName>
        <fullName>Neuroblastoma breakpoint family member 4</fullName>
    </alternativeName>
</protein>
<proteinExistence type="evidence at transcript level"/>
<gene>
    <name evidence="6" type="primary">NBPF4</name>
</gene>